<keyword id="KW-0028">Amino-acid biosynthesis</keyword>
<keyword id="KW-0963">Cytoplasm</keyword>
<keyword id="KW-0368">Histidine biosynthesis</keyword>
<keyword id="KW-0378">Hydrolase</keyword>
<keyword id="KW-0460">Magnesium</keyword>
<keyword id="KW-0479">Metal-binding</keyword>
<keyword id="KW-1185">Reference proteome</keyword>
<keyword id="KW-0862">Zinc</keyword>
<evidence type="ECO:0000255" key="1">
    <source>
        <dbReference type="HAMAP-Rule" id="MF_01021"/>
    </source>
</evidence>
<name>HIS3_NITEU</name>
<proteinExistence type="inferred from homology"/>
<gene>
    <name evidence="1" type="primary">hisI</name>
    <name type="ordered locus">NE0642</name>
</gene>
<reference key="1">
    <citation type="journal article" date="2003" name="J. Bacteriol.">
        <title>Complete genome sequence of the ammonia-oxidizing bacterium and obligate chemolithoautotroph Nitrosomonas europaea.</title>
        <authorList>
            <person name="Chain P."/>
            <person name="Lamerdin J.E."/>
            <person name="Larimer F.W."/>
            <person name="Regala W."/>
            <person name="Lao V."/>
            <person name="Land M.L."/>
            <person name="Hauser L."/>
            <person name="Hooper A.B."/>
            <person name="Klotz M.G."/>
            <person name="Norton J."/>
            <person name="Sayavedra-Soto L.A."/>
            <person name="Arciero D.M."/>
            <person name="Hommes N.G."/>
            <person name="Whittaker M.M."/>
            <person name="Arp D.J."/>
        </authorList>
    </citation>
    <scope>NUCLEOTIDE SEQUENCE [LARGE SCALE GENOMIC DNA]</scope>
    <source>
        <strain>ATCC 19718 / CIP 103999 / KCTC 2705 / NBRC 14298</strain>
    </source>
</reference>
<protein>
    <recommendedName>
        <fullName evidence="1">Phosphoribosyl-AMP cyclohydrolase</fullName>
        <shortName evidence="1">PRA-CH</shortName>
        <ecNumber evidence="1">3.5.4.19</ecNumber>
    </recommendedName>
</protein>
<feature type="chain" id="PRO_0000136490" description="Phosphoribosyl-AMP cyclohydrolase">
    <location>
        <begin position="1"/>
        <end position="129"/>
    </location>
</feature>
<feature type="binding site" evidence="1">
    <location>
        <position position="78"/>
    </location>
    <ligand>
        <name>Mg(2+)</name>
        <dbReference type="ChEBI" id="CHEBI:18420"/>
    </ligand>
</feature>
<feature type="binding site" evidence="1">
    <location>
        <position position="79"/>
    </location>
    <ligand>
        <name>Zn(2+)</name>
        <dbReference type="ChEBI" id="CHEBI:29105"/>
        <note>ligand shared between dimeric partners</note>
    </ligand>
</feature>
<feature type="binding site" evidence="1">
    <location>
        <position position="80"/>
    </location>
    <ligand>
        <name>Mg(2+)</name>
        <dbReference type="ChEBI" id="CHEBI:18420"/>
    </ligand>
</feature>
<feature type="binding site" evidence="1">
    <location>
        <position position="82"/>
    </location>
    <ligand>
        <name>Mg(2+)</name>
        <dbReference type="ChEBI" id="CHEBI:18420"/>
    </ligand>
</feature>
<feature type="binding site" evidence="1">
    <location>
        <position position="96"/>
    </location>
    <ligand>
        <name>Zn(2+)</name>
        <dbReference type="ChEBI" id="CHEBI:29105"/>
        <note>ligand shared between dimeric partners</note>
    </ligand>
</feature>
<feature type="binding site" evidence="1">
    <location>
        <position position="103"/>
    </location>
    <ligand>
        <name>Zn(2+)</name>
        <dbReference type="ChEBI" id="CHEBI:29105"/>
        <note>ligand shared between dimeric partners</note>
    </ligand>
</feature>
<comment type="function">
    <text evidence="1">Catalyzes the hydrolysis of the adenine ring of phosphoribosyl-AMP.</text>
</comment>
<comment type="catalytic activity">
    <reaction evidence="1">
        <text>1-(5-phospho-beta-D-ribosyl)-5'-AMP + H2O = 1-(5-phospho-beta-D-ribosyl)-5-[(5-phospho-beta-D-ribosylamino)methylideneamino]imidazole-4-carboxamide</text>
        <dbReference type="Rhea" id="RHEA:20049"/>
        <dbReference type="ChEBI" id="CHEBI:15377"/>
        <dbReference type="ChEBI" id="CHEBI:58435"/>
        <dbReference type="ChEBI" id="CHEBI:59457"/>
        <dbReference type="EC" id="3.5.4.19"/>
    </reaction>
</comment>
<comment type="cofactor">
    <cofactor evidence="1">
        <name>Mg(2+)</name>
        <dbReference type="ChEBI" id="CHEBI:18420"/>
    </cofactor>
    <text evidence="1">Binds 1 Mg(2+) ion per subunit.</text>
</comment>
<comment type="cofactor">
    <cofactor evidence="1">
        <name>Zn(2+)</name>
        <dbReference type="ChEBI" id="CHEBI:29105"/>
    </cofactor>
    <text evidence="1">Binds 1 zinc ion per subunit.</text>
</comment>
<comment type="pathway">
    <text evidence="1">Amino-acid biosynthesis; L-histidine biosynthesis; L-histidine from 5-phospho-alpha-D-ribose 1-diphosphate: step 3/9.</text>
</comment>
<comment type="subunit">
    <text evidence="1">Homodimer.</text>
</comment>
<comment type="subcellular location">
    <subcellularLocation>
        <location evidence="1">Cytoplasm</location>
    </subcellularLocation>
</comment>
<comment type="similarity">
    <text evidence="1">Belongs to the PRA-CH family.</text>
</comment>
<accession>Q82WM6</accession>
<sequence>MTDKWLDTINWSADGLIPAIAQDKNNGKILMVAWMNREALKRTVESGEAVYWSRSRKKLWHKGEESGHTQKISAIHLDCDEDILLLSVEQKGGIACHTGRQSCFFRQLKNGEWVVTEPVIKDPSQIYTK</sequence>
<dbReference type="EC" id="3.5.4.19" evidence="1"/>
<dbReference type="EMBL" id="AL954747">
    <property type="protein sequence ID" value="CAD84553.1"/>
    <property type="molecule type" value="Genomic_DNA"/>
</dbReference>
<dbReference type="RefSeq" id="WP_011111265.1">
    <property type="nucleotide sequence ID" value="NC_004757.1"/>
</dbReference>
<dbReference type="SMR" id="Q82WM6"/>
<dbReference type="STRING" id="228410.NE0642"/>
<dbReference type="GeneID" id="87103839"/>
<dbReference type="KEGG" id="neu:NE0642"/>
<dbReference type="eggNOG" id="COG0139">
    <property type="taxonomic scope" value="Bacteria"/>
</dbReference>
<dbReference type="HOGENOM" id="CLU_048577_5_0_4"/>
<dbReference type="OrthoDB" id="9795769at2"/>
<dbReference type="PhylomeDB" id="Q82WM6"/>
<dbReference type="UniPathway" id="UPA00031">
    <property type="reaction ID" value="UER00008"/>
</dbReference>
<dbReference type="Proteomes" id="UP000001416">
    <property type="component" value="Chromosome"/>
</dbReference>
<dbReference type="GO" id="GO:0005737">
    <property type="term" value="C:cytoplasm"/>
    <property type="evidence" value="ECO:0007669"/>
    <property type="project" value="UniProtKB-SubCell"/>
</dbReference>
<dbReference type="GO" id="GO:0000287">
    <property type="term" value="F:magnesium ion binding"/>
    <property type="evidence" value="ECO:0007669"/>
    <property type="project" value="UniProtKB-UniRule"/>
</dbReference>
<dbReference type="GO" id="GO:0004635">
    <property type="term" value="F:phosphoribosyl-AMP cyclohydrolase activity"/>
    <property type="evidence" value="ECO:0007669"/>
    <property type="project" value="UniProtKB-UniRule"/>
</dbReference>
<dbReference type="GO" id="GO:0008270">
    <property type="term" value="F:zinc ion binding"/>
    <property type="evidence" value="ECO:0007669"/>
    <property type="project" value="UniProtKB-UniRule"/>
</dbReference>
<dbReference type="GO" id="GO:0000105">
    <property type="term" value="P:L-histidine biosynthetic process"/>
    <property type="evidence" value="ECO:0007669"/>
    <property type="project" value="UniProtKB-UniRule"/>
</dbReference>
<dbReference type="FunFam" id="3.10.20.810:FF:000001">
    <property type="entry name" value="Histidine biosynthesis bifunctional protein HisIE"/>
    <property type="match status" value="1"/>
</dbReference>
<dbReference type="Gene3D" id="3.10.20.810">
    <property type="entry name" value="Phosphoribosyl-AMP cyclohydrolase"/>
    <property type="match status" value="1"/>
</dbReference>
<dbReference type="HAMAP" id="MF_01021">
    <property type="entry name" value="HisI"/>
    <property type="match status" value="1"/>
</dbReference>
<dbReference type="InterPro" id="IPR026660">
    <property type="entry name" value="PRA-CH"/>
</dbReference>
<dbReference type="InterPro" id="IPR002496">
    <property type="entry name" value="PRib_AMP_CycHydrolase_dom"/>
</dbReference>
<dbReference type="InterPro" id="IPR038019">
    <property type="entry name" value="PRib_AMP_CycHydrolase_sf"/>
</dbReference>
<dbReference type="NCBIfam" id="NF000768">
    <property type="entry name" value="PRK00051.1"/>
    <property type="match status" value="1"/>
</dbReference>
<dbReference type="PANTHER" id="PTHR42945">
    <property type="entry name" value="HISTIDINE BIOSYNTHESIS BIFUNCTIONAL PROTEIN"/>
    <property type="match status" value="1"/>
</dbReference>
<dbReference type="PANTHER" id="PTHR42945:SF1">
    <property type="entry name" value="HISTIDINE BIOSYNTHESIS BIFUNCTIONAL PROTEIN HIS7"/>
    <property type="match status" value="1"/>
</dbReference>
<dbReference type="Pfam" id="PF01502">
    <property type="entry name" value="PRA-CH"/>
    <property type="match status" value="1"/>
</dbReference>
<dbReference type="SUPFAM" id="SSF141734">
    <property type="entry name" value="HisI-like"/>
    <property type="match status" value="1"/>
</dbReference>
<organism>
    <name type="scientific">Nitrosomonas europaea (strain ATCC 19718 / CIP 103999 / KCTC 2705 / NBRC 14298)</name>
    <dbReference type="NCBI Taxonomy" id="228410"/>
    <lineage>
        <taxon>Bacteria</taxon>
        <taxon>Pseudomonadati</taxon>
        <taxon>Pseudomonadota</taxon>
        <taxon>Betaproteobacteria</taxon>
        <taxon>Nitrosomonadales</taxon>
        <taxon>Nitrosomonadaceae</taxon>
        <taxon>Nitrosomonas</taxon>
    </lineage>
</organism>